<feature type="chain" id="PRO_0000123239" description="Small ribosomal subunit protein uS11">
    <location>
        <begin position="1"/>
        <end position="129"/>
    </location>
</feature>
<sequence length="129" mass="13949">MAKRTARVKRRERKNVDKGVAHIRSTFNNTIVTITDVHGNALAWATAGAMGFKGSRKSTPFAAQMAAEKAAKDAMEHGVREVEVLVKGPGSGREAAIRQLQAAGLEVTAIKDVTPIPHNGCRPPKRRRV</sequence>
<proteinExistence type="inferred from homology"/>
<evidence type="ECO:0000255" key="1">
    <source>
        <dbReference type="HAMAP-Rule" id="MF_01310"/>
    </source>
</evidence>
<evidence type="ECO:0000305" key="2"/>
<reference key="1">
    <citation type="journal article" date="2004" name="Nucleic Acids Res.">
        <title>Genome sequence of Symbiobacterium thermophilum, an uncultivable bacterium that depends on microbial commensalism.</title>
        <authorList>
            <person name="Ueda K."/>
            <person name="Yamashita A."/>
            <person name="Ishikawa J."/>
            <person name="Shimada M."/>
            <person name="Watsuji T."/>
            <person name="Morimura K."/>
            <person name="Ikeda H."/>
            <person name="Hattori M."/>
            <person name="Beppu T."/>
        </authorList>
    </citation>
    <scope>NUCLEOTIDE SEQUENCE [LARGE SCALE GENOMIC DNA]</scope>
    <source>
        <strain>DSM 24528 / JCM 14929 / IAM 14863 / T</strain>
    </source>
</reference>
<organism>
    <name type="scientific">Symbiobacterium thermophilum (strain DSM 24528 / JCM 14929 / IAM 14863 / T)</name>
    <dbReference type="NCBI Taxonomy" id="292459"/>
    <lineage>
        <taxon>Bacteria</taxon>
        <taxon>Bacillati</taxon>
        <taxon>Bacillota</taxon>
        <taxon>Clostridia</taxon>
        <taxon>Eubacteriales</taxon>
        <taxon>Symbiobacteriaceae</taxon>
        <taxon>Symbiobacterium</taxon>
    </lineage>
</organism>
<accession>Q67JW9</accession>
<protein>
    <recommendedName>
        <fullName evidence="1">Small ribosomal subunit protein uS11</fullName>
    </recommendedName>
    <alternativeName>
        <fullName evidence="2">30S ribosomal protein S11</fullName>
    </alternativeName>
</protein>
<gene>
    <name evidence="1" type="primary">rpsK</name>
    <name type="ordered locus">STH3049</name>
</gene>
<comment type="function">
    <text evidence="1">Located on the platform of the 30S subunit, it bridges several disparate RNA helices of the 16S rRNA. Forms part of the Shine-Dalgarno cleft in the 70S ribosome.</text>
</comment>
<comment type="subunit">
    <text evidence="1">Part of the 30S ribosomal subunit. Interacts with proteins S7 and S18. Binds to IF-3.</text>
</comment>
<comment type="similarity">
    <text evidence="1">Belongs to the universal ribosomal protein uS11 family.</text>
</comment>
<dbReference type="EMBL" id="AP006840">
    <property type="protein sequence ID" value="BAD42031.1"/>
    <property type="molecule type" value="Genomic_DNA"/>
</dbReference>
<dbReference type="RefSeq" id="WP_011197164.1">
    <property type="nucleotide sequence ID" value="NC_006177.1"/>
</dbReference>
<dbReference type="SMR" id="Q67JW9"/>
<dbReference type="STRING" id="292459.STH3049"/>
<dbReference type="KEGG" id="sth:STH3049"/>
<dbReference type="eggNOG" id="COG0100">
    <property type="taxonomic scope" value="Bacteria"/>
</dbReference>
<dbReference type="HOGENOM" id="CLU_072439_5_0_9"/>
<dbReference type="OrthoDB" id="9806415at2"/>
<dbReference type="Proteomes" id="UP000000417">
    <property type="component" value="Chromosome"/>
</dbReference>
<dbReference type="GO" id="GO:1990904">
    <property type="term" value="C:ribonucleoprotein complex"/>
    <property type="evidence" value="ECO:0007669"/>
    <property type="project" value="UniProtKB-KW"/>
</dbReference>
<dbReference type="GO" id="GO:0005840">
    <property type="term" value="C:ribosome"/>
    <property type="evidence" value="ECO:0007669"/>
    <property type="project" value="UniProtKB-KW"/>
</dbReference>
<dbReference type="GO" id="GO:0019843">
    <property type="term" value="F:rRNA binding"/>
    <property type="evidence" value="ECO:0007669"/>
    <property type="project" value="UniProtKB-UniRule"/>
</dbReference>
<dbReference type="GO" id="GO:0003735">
    <property type="term" value="F:structural constituent of ribosome"/>
    <property type="evidence" value="ECO:0007669"/>
    <property type="project" value="InterPro"/>
</dbReference>
<dbReference type="GO" id="GO:0006412">
    <property type="term" value="P:translation"/>
    <property type="evidence" value="ECO:0007669"/>
    <property type="project" value="UniProtKB-UniRule"/>
</dbReference>
<dbReference type="FunFam" id="3.30.420.80:FF:000001">
    <property type="entry name" value="30S ribosomal protein S11"/>
    <property type="match status" value="1"/>
</dbReference>
<dbReference type="Gene3D" id="3.30.420.80">
    <property type="entry name" value="Ribosomal protein S11"/>
    <property type="match status" value="1"/>
</dbReference>
<dbReference type="HAMAP" id="MF_01310">
    <property type="entry name" value="Ribosomal_uS11"/>
    <property type="match status" value="1"/>
</dbReference>
<dbReference type="InterPro" id="IPR001971">
    <property type="entry name" value="Ribosomal_uS11"/>
</dbReference>
<dbReference type="InterPro" id="IPR019981">
    <property type="entry name" value="Ribosomal_uS11_bac-type"/>
</dbReference>
<dbReference type="InterPro" id="IPR018102">
    <property type="entry name" value="Ribosomal_uS11_CS"/>
</dbReference>
<dbReference type="InterPro" id="IPR036967">
    <property type="entry name" value="Ribosomal_uS11_sf"/>
</dbReference>
<dbReference type="NCBIfam" id="NF003698">
    <property type="entry name" value="PRK05309.1"/>
    <property type="match status" value="1"/>
</dbReference>
<dbReference type="NCBIfam" id="TIGR03632">
    <property type="entry name" value="uS11_bact"/>
    <property type="match status" value="1"/>
</dbReference>
<dbReference type="PANTHER" id="PTHR11759">
    <property type="entry name" value="40S RIBOSOMAL PROTEIN S14/30S RIBOSOMAL PROTEIN S11"/>
    <property type="match status" value="1"/>
</dbReference>
<dbReference type="Pfam" id="PF00411">
    <property type="entry name" value="Ribosomal_S11"/>
    <property type="match status" value="1"/>
</dbReference>
<dbReference type="PIRSF" id="PIRSF002131">
    <property type="entry name" value="Ribosomal_S11"/>
    <property type="match status" value="1"/>
</dbReference>
<dbReference type="SUPFAM" id="SSF53137">
    <property type="entry name" value="Translational machinery components"/>
    <property type="match status" value="1"/>
</dbReference>
<dbReference type="PROSITE" id="PS00054">
    <property type="entry name" value="RIBOSOMAL_S11"/>
    <property type="match status" value="1"/>
</dbReference>
<name>RS11_SYMTH</name>
<keyword id="KW-1185">Reference proteome</keyword>
<keyword id="KW-0687">Ribonucleoprotein</keyword>
<keyword id="KW-0689">Ribosomal protein</keyword>
<keyword id="KW-0694">RNA-binding</keyword>
<keyword id="KW-0699">rRNA-binding</keyword>